<comment type="function">
    <text evidence="1">The glycine cleavage system catalyzes the degradation of glycine. The P protein binds the alpha-amino group of glycine through its pyridoxal phosphate cofactor; CO(2) is released and the remaining methylamine moiety is then transferred to the lipoamide cofactor of the H protein.</text>
</comment>
<comment type="catalytic activity">
    <reaction evidence="1">
        <text>N(6)-[(R)-lipoyl]-L-lysyl-[glycine-cleavage complex H protein] + glycine + H(+) = N(6)-[(R)-S(8)-aminomethyldihydrolipoyl]-L-lysyl-[glycine-cleavage complex H protein] + CO2</text>
        <dbReference type="Rhea" id="RHEA:24304"/>
        <dbReference type="Rhea" id="RHEA-COMP:10494"/>
        <dbReference type="Rhea" id="RHEA-COMP:10495"/>
        <dbReference type="ChEBI" id="CHEBI:15378"/>
        <dbReference type="ChEBI" id="CHEBI:16526"/>
        <dbReference type="ChEBI" id="CHEBI:57305"/>
        <dbReference type="ChEBI" id="CHEBI:83099"/>
        <dbReference type="ChEBI" id="CHEBI:83143"/>
        <dbReference type="EC" id="1.4.4.2"/>
    </reaction>
</comment>
<comment type="cofactor">
    <cofactor evidence="1">
        <name>pyridoxal 5'-phosphate</name>
        <dbReference type="ChEBI" id="CHEBI:597326"/>
    </cofactor>
</comment>
<comment type="subunit">
    <text evidence="1">The glycine cleavage system is composed of four proteins: P, T, L and H.</text>
</comment>
<comment type="similarity">
    <text evidence="1">Belongs to the GcvP family.</text>
</comment>
<keyword id="KW-0560">Oxidoreductase</keyword>
<keyword id="KW-0663">Pyridoxal phosphate</keyword>
<organism>
    <name type="scientific">Bordetella petrii (strain ATCC BAA-461 / DSM 12804 / CCUG 43448)</name>
    <dbReference type="NCBI Taxonomy" id="340100"/>
    <lineage>
        <taxon>Bacteria</taxon>
        <taxon>Pseudomonadati</taxon>
        <taxon>Pseudomonadota</taxon>
        <taxon>Betaproteobacteria</taxon>
        <taxon>Burkholderiales</taxon>
        <taxon>Alcaligenaceae</taxon>
        <taxon>Bordetella</taxon>
    </lineage>
</organism>
<gene>
    <name evidence="1" type="primary">gcvP</name>
    <name type="ordered locus">Bpet4074</name>
</gene>
<evidence type="ECO:0000255" key="1">
    <source>
        <dbReference type="HAMAP-Rule" id="MF_00711"/>
    </source>
</evidence>
<sequence>MSRALDPHTDFIPRHIGPTAADQEKMLAAIGCGSLDALLQEVVPPAIRSQGPLALPASRSESDVLADLKAVAGRNRIYRNYIGQGYYGTHTPNVVLRNVLENPAWYTAYTPYQPEISQGRLEALLNYQTMVADLTGLDISNASLLDEGTAAAEAMTLARRGSKSASQVFFVSAHCHPQTIEVVRTRAEGLGIEVALGDEAQGLPECFGVLLQYPHSLGGVADYRALAEAAHAQGAVVACATDLLALALMTPPGEWGADIAIGSSQRFGVPFGFGGPHAGFMACKDAYKRNMPGRLVGVSKDAQGNPALRLALQTREQHIRREKATSNICTAQVLLAVMAGLYAVWHGPDGIRRIATRVHRYTAILRAALTQLGIKVVNDTFFDTLLLETGVATPAIVEAAVCEHINLRRVDGARLAVSLDETVTAADLQALVNVFAAGLQKDDLALDIDAHDAAAPGGIPAALQRQGGILAHPVFSSIQSETDMLRYLRKLADKDLALDRSMIPLGSCTMKLNATAEMIPITWPEFALIHPYAPADQSAGYRELIERLSKALCEITGYDDISLQPNSGAQGEYAGLLAIRGYHRANGQAQRNVCLIPASAHGTNPASAQLAGMEVVVVASDANGNVDLDDLRAKLTQVGDRLAALMITYPSTHGVFEESITHICDLVHQAGGQVYLDGANMNAMVGVARPGKFGSDVSHLNLHKTFCIPHGGGGPGVGPVAVRSHLAPFLPGVLNAQGKLGGETGIGPVAAAPYGSAGILPISYAYIALMGADGLRRATEVAILNANYVAARLRDYYPVLYAGRNGRVAHECILDVRPLKDSSGISAEDIAKRLMDYGFHAPTMSFPVAGTLMVEPTESEGLAELERFIDAMIAIREEIAQVERGERDRDDNVLKNAPHTAQMLLAEEWLHDYPRQQAAYPVASLRDAKYWPPVARVDNAYGDRNLVCACLPVEAYA</sequence>
<reference key="1">
    <citation type="journal article" date="2008" name="BMC Genomics">
        <title>The missing link: Bordetella petrii is endowed with both the metabolic versatility of environmental bacteria and virulence traits of pathogenic Bordetellae.</title>
        <authorList>
            <person name="Gross R."/>
            <person name="Guzman C.A."/>
            <person name="Sebaihia M."/>
            <person name="Martin dos Santos V.A.P."/>
            <person name="Pieper D.H."/>
            <person name="Koebnik R."/>
            <person name="Lechner M."/>
            <person name="Bartels D."/>
            <person name="Buhrmester J."/>
            <person name="Choudhuri J.V."/>
            <person name="Ebensen T."/>
            <person name="Gaigalat L."/>
            <person name="Herrmann S."/>
            <person name="Khachane A.N."/>
            <person name="Larisch C."/>
            <person name="Link S."/>
            <person name="Linke B."/>
            <person name="Meyer F."/>
            <person name="Mormann S."/>
            <person name="Nakunst D."/>
            <person name="Rueckert C."/>
            <person name="Schneiker-Bekel S."/>
            <person name="Schulze K."/>
            <person name="Voerholter F.-J."/>
            <person name="Yevsa T."/>
            <person name="Engle J.T."/>
            <person name="Goldman W.E."/>
            <person name="Puehler A."/>
            <person name="Goebel U.B."/>
            <person name="Goesmann A."/>
            <person name="Bloecker H."/>
            <person name="Kaiser O."/>
            <person name="Martinez-Arias R."/>
        </authorList>
    </citation>
    <scope>NUCLEOTIDE SEQUENCE [LARGE SCALE GENOMIC DNA]</scope>
    <source>
        <strain>ATCC BAA-461 / DSM 12804 / CCUG 43448</strain>
    </source>
</reference>
<dbReference type="EC" id="1.4.4.2" evidence="1"/>
<dbReference type="EMBL" id="AM902716">
    <property type="protein sequence ID" value="CAP44422.1"/>
    <property type="molecule type" value="Genomic_DNA"/>
</dbReference>
<dbReference type="SMR" id="A9I7K9"/>
<dbReference type="STRING" id="94624.Bpet4074"/>
<dbReference type="KEGG" id="bpt:Bpet4074"/>
<dbReference type="eggNOG" id="COG0403">
    <property type="taxonomic scope" value="Bacteria"/>
</dbReference>
<dbReference type="eggNOG" id="COG1003">
    <property type="taxonomic scope" value="Bacteria"/>
</dbReference>
<dbReference type="Proteomes" id="UP000001225">
    <property type="component" value="Chromosome"/>
</dbReference>
<dbReference type="GO" id="GO:0005829">
    <property type="term" value="C:cytosol"/>
    <property type="evidence" value="ECO:0007669"/>
    <property type="project" value="TreeGrafter"/>
</dbReference>
<dbReference type="GO" id="GO:0005960">
    <property type="term" value="C:glycine cleavage complex"/>
    <property type="evidence" value="ECO:0007669"/>
    <property type="project" value="TreeGrafter"/>
</dbReference>
<dbReference type="GO" id="GO:0016594">
    <property type="term" value="F:glycine binding"/>
    <property type="evidence" value="ECO:0007669"/>
    <property type="project" value="TreeGrafter"/>
</dbReference>
<dbReference type="GO" id="GO:0004375">
    <property type="term" value="F:glycine dehydrogenase (decarboxylating) activity"/>
    <property type="evidence" value="ECO:0007669"/>
    <property type="project" value="UniProtKB-EC"/>
</dbReference>
<dbReference type="GO" id="GO:0030170">
    <property type="term" value="F:pyridoxal phosphate binding"/>
    <property type="evidence" value="ECO:0007669"/>
    <property type="project" value="TreeGrafter"/>
</dbReference>
<dbReference type="GO" id="GO:0019464">
    <property type="term" value="P:glycine decarboxylation via glycine cleavage system"/>
    <property type="evidence" value="ECO:0007669"/>
    <property type="project" value="UniProtKB-UniRule"/>
</dbReference>
<dbReference type="CDD" id="cd00613">
    <property type="entry name" value="GDC-P"/>
    <property type="match status" value="2"/>
</dbReference>
<dbReference type="FunFam" id="3.40.640.10:FF:000005">
    <property type="entry name" value="Glycine dehydrogenase (decarboxylating), mitochondrial"/>
    <property type="match status" value="1"/>
</dbReference>
<dbReference type="FunFam" id="3.90.1150.10:FF:000007">
    <property type="entry name" value="Glycine dehydrogenase (decarboxylating), mitochondrial"/>
    <property type="match status" value="1"/>
</dbReference>
<dbReference type="FunFam" id="3.40.640.10:FF:000007">
    <property type="entry name" value="glycine dehydrogenase (Decarboxylating), mitochondrial"/>
    <property type="match status" value="1"/>
</dbReference>
<dbReference type="Gene3D" id="3.90.1150.10">
    <property type="entry name" value="Aspartate Aminotransferase, domain 1"/>
    <property type="match status" value="2"/>
</dbReference>
<dbReference type="Gene3D" id="3.40.640.10">
    <property type="entry name" value="Type I PLP-dependent aspartate aminotransferase-like (Major domain)"/>
    <property type="match status" value="2"/>
</dbReference>
<dbReference type="HAMAP" id="MF_00711">
    <property type="entry name" value="GcvP"/>
    <property type="match status" value="1"/>
</dbReference>
<dbReference type="InterPro" id="IPR003437">
    <property type="entry name" value="GcvP"/>
</dbReference>
<dbReference type="InterPro" id="IPR049316">
    <property type="entry name" value="GDC-P_C"/>
</dbReference>
<dbReference type="InterPro" id="IPR049315">
    <property type="entry name" value="GDC-P_N"/>
</dbReference>
<dbReference type="InterPro" id="IPR020581">
    <property type="entry name" value="GDC_P"/>
</dbReference>
<dbReference type="InterPro" id="IPR015424">
    <property type="entry name" value="PyrdxlP-dep_Trfase"/>
</dbReference>
<dbReference type="InterPro" id="IPR015421">
    <property type="entry name" value="PyrdxlP-dep_Trfase_major"/>
</dbReference>
<dbReference type="InterPro" id="IPR015422">
    <property type="entry name" value="PyrdxlP-dep_Trfase_small"/>
</dbReference>
<dbReference type="NCBIfam" id="TIGR00461">
    <property type="entry name" value="gcvP"/>
    <property type="match status" value="1"/>
</dbReference>
<dbReference type="NCBIfam" id="NF001696">
    <property type="entry name" value="PRK00451.1"/>
    <property type="match status" value="1"/>
</dbReference>
<dbReference type="NCBIfam" id="NF003346">
    <property type="entry name" value="PRK04366.1"/>
    <property type="match status" value="1"/>
</dbReference>
<dbReference type="PANTHER" id="PTHR11773:SF1">
    <property type="entry name" value="GLYCINE DEHYDROGENASE (DECARBOXYLATING), MITOCHONDRIAL"/>
    <property type="match status" value="1"/>
</dbReference>
<dbReference type="PANTHER" id="PTHR11773">
    <property type="entry name" value="GLYCINE DEHYDROGENASE, DECARBOXYLATING"/>
    <property type="match status" value="1"/>
</dbReference>
<dbReference type="Pfam" id="PF21478">
    <property type="entry name" value="GcvP2_C"/>
    <property type="match status" value="1"/>
</dbReference>
<dbReference type="Pfam" id="PF02347">
    <property type="entry name" value="GDC-P"/>
    <property type="match status" value="2"/>
</dbReference>
<dbReference type="SUPFAM" id="SSF53383">
    <property type="entry name" value="PLP-dependent transferases"/>
    <property type="match status" value="2"/>
</dbReference>
<name>GCSP_BORPD</name>
<accession>A9I7K9</accession>
<feature type="chain" id="PRO_1000190205" description="Glycine dehydrogenase (decarboxylating)">
    <location>
        <begin position="1"/>
        <end position="957"/>
    </location>
</feature>
<feature type="modified residue" description="N6-(pyridoxal phosphate)lysine" evidence="1">
    <location>
        <position position="704"/>
    </location>
</feature>
<protein>
    <recommendedName>
        <fullName evidence="1">Glycine dehydrogenase (decarboxylating)</fullName>
        <ecNumber evidence="1">1.4.4.2</ecNumber>
    </recommendedName>
    <alternativeName>
        <fullName evidence="1">Glycine cleavage system P-protein</fullName>
    </alternativeName>
    <alternativeName>
        <fullName evidence="1">Glycine decarboxylase</fullName>
    </alternativeName>
    <alternativeName>
        <fullName evidence="1">Glycine dehydrogenase (aminomethyl-transferring)</fullName>
    </alternativeName>
</protein>
<proteinExistence type="inferred from homology"/>